<keyword id="KW-1185">Reference proteome</keyword>
<dbReference type="EMBL" id="AB015474">
    <property type="protein sequence ID" value="BAB02286.1"/>
    <property type="molecule type" value="Genomic_DNA"/>
</dbReference>
<dbReference type="EMBL" id="CP002686">
    <property type="protein sequence ID" value="AEE76763.1"/>
    <property type="status" value="ALT_SEQ"/>
    <property type="molecule type" value="Genomic_DNA"/>
</dbReference>
<dbReference type="EMBL" id="CP002686">
    <property type="protein sequence ID" value="ANM65062.1"/>
    <property type="molecule type" value="Genomic_DNA"/>
</dbReference>
<dbReference type="RefSeq" id="NP_001327059.1">
    <property type="nucleotide sequence ID" value="NM_001338635.1"/>
</dbReference>
<dbReference type="RefSeq" id="NP_188984.1">
    <property type="nucleotide sequence ID" value="NM_113245.1"/>
</dbReference>
<dbReference type="FunCoup" id="Q9LW55">
    <property type="interactions" value="2"/>
</dbReference>
<dbReference type="STRING" id="3702.Q9LW55"/>
<dbReference type="ProteomicsDB" id="230854"/>
<dbReference type="EnsemblPlants" id="AT3G23420.2">
    <property type="protein sequence ID" value="AT3G23420.2"/>
    <property type="gene ID" value="AT3G23420"/>
</dbReference>
<dbReference type="GeneID" id="821923"/>
<dbReference type="Gramene" id="AT3G23420.2">
    <property type="protein sequence ID" value="AT3G23420.2"/>
    <property type="gene ID" value="AT3G23420"/>
</dbReference>
<dbReference type="KEGG" id="ath:AT3G23420"/>
<dbReference type="Araport" id="AT3G23420"/>
<dbReference type="TAIR" id="AT3G23420"/>
<dbReference type="InParanoid" id="Q9LW55"/>
<dbReference type="PhylomeDB" id="Q9LW55"/>
<dbReference type="PRO" id="PR:Q9LW55"/>
<dbReference type="Proteomes" id="UP000006548">
    <property type="component" value="Chromosome 3"/>
</dbReference>
<dbReference type="ExpressionAtlas" id="Q9LW55">
    <property type="expression patterns" value="baseline and differential"/>
</dbReference>
<dbReference type="CDD" id="cd22157">
    <property type="entry name" value="F-box_AtFBW1-like"/>
    <property type="match status" value="1"/>
</dbReference>
<dbReference type="Gene3D" id="1.20.1280.50">
    <property type="match status" value="1"/>
</dbReference>
<dbReference type="InterPro" id="IPR006527">
    <property type="entry name" value="F-box-assoc_dom_typ1"/>
</dbReference>
<dbReference type="InterPro" id="IPR017451">
    <property type="entry name" value="F-box-assoc_interact_dom"/>
</dbReference>
<dbReference type="InterPro" id="IPR036047">
    <property type="entry name" value="F-box-like_dom_sf"/>
</dbReference>
<dbReference type="InterPro" id="IPR001810">
    <property type="entry name" value="F-box_dom"/>
</dbReference>
<dbReference type="InterPro" id="IPR050796">
    <property type="entry name" value="SCF_F-box_component"/>
</dbReference>
<dbReference type="NCBIfam" id="TIGR01640">
    <property type="entry name" value="F_box_assoc_1"/>
    <property type="match status" value="1"/>
</dbReference>
<dbReference type="PANTHER" id="PTHR31672">
    <property type="entry name" value="BNACNNG10540D PROTEIN"/>
    <property type="match status" value="1"/>
</dbReference>
<dbReference type="PANTHER" id="PTHR31672:SF13">
    <property type="entry name" value="F-BOX PROTEIN CPR30-LIKE"/>
    <property type="match status" value="1"/>
</dbReference>
<dbReference type="Pfam" id="PF00646">
    <property type="entry name" value="F-box"/>
    <property type="match status" value="1"/>
</dbReference>
<dbReference type="Pfam" id="PF07734">
    <property type="entry name" value="FBA_1"/>
    <property type="match status" value="1"/>
</dbReference>
<dbReference type="SMART" id="SM00256">
    <property type="entry name" value="FBOX"/>
    <property type="match status" value="1"/>
</dbReference>
<dbReference type="SUPFAM" id="SSF81383">
    <property type="entry name" value="F-box domain"/>
    <property type="match status" value="1"/>
</dbReference>
<dbReference type="PROSITE" id="PS50181">
    <property type="entry name" value="FBOX"/>
    <property type="match status" value="1"/>
</dbReference>
<protein>
    <recommendedName>
        <fullName>Putative F-box protein At3g23420</fullName>
    </recommendedName>
</protein>
<accession>Q9LW55</accession>
<accession>F4J428</accession>
<proteinExistence type="predicted"/>
<organism>
    <name type="scientific">Arabidopsis thaliana</name>
    <name type="common">Mouse-ear cress</name>
    <dbReference type="NCBI Taxonomy" id="3702"/>
    <lineage>
        <taxon>Eukaryota</taxon>
        <taxon>Viridiplantae</taxon>
        <taxon>Streptophyta</taxon>
        <taxon>Embryophyta</taxon>
        <taxon>Tracheophyta</taxon>
        <taxon>Spermatophyta</taxon>
        <taxon>Magnoliopsida</taxon>
        <taxon>eudicotyledons</taxon>
        <taxon>Gunneridae</taxon>
        <taxon>Pentapetalae</taxon>
        <taxon>rosids</taxon>
        <taxon>malvids</taxon>
        <taxon>Brassicales</taxon>
        <taxon>Brassicaceae</taxon>
        <taxon>Camelineae</taxon>
        <taxon>Arabidopsis</taxon>
    </lineage>
</organism>
<gene>
    <name type="ordered locus">At3g23420</name>
    <name type="ORF">MLM24.15</name>
</gene>
<feature type="chain" id="PRO_0000283450" description="Putative F-box protein At3g23420">
    <location>
        <begin position="1"/>
        <end position="268"/>
    </location>
</feature>
<feature type="domain" description="F-box" evidence="1">
    <location>
        <begin position="5"/>
        <end position="51"/>
    </location>
</feature>
<evidence type="ECO:0000255" key="1">
    <source>
        <dbReference type="PROSITE-ProRule" id="PRU00080"/>
    </source>
</evidence>
<evidence type="ECO:0000305" key="2"/>
<sequence>MSNLPRDLSDLPRNMAEEVLSRVPMTSLRRLRFTCKKWNTLSRCRSFAKKHLVCQAKVAAKKREYKVVMMMDFRVYLMRINLQNNVELCIKRERELLFPDASDQIYVRHVFHCDGLLLCIMKDNPRLVVCNPYSGQTRWIETTNNPQRLDAYSYALGYNSSTKSHKILSFGMMFDYVSSTSAEFKIYDFNSDSWRLAVLFQRMDTLQMEIWVTTKIEPNTVSWSSKFFLSVDMRELTGRYSMFSFSDASFFIDEEKKVAVVFDKGKKK</sequence>
<comment type="sequence caution" evidence="2">
    <conflict type="erroneous gene model prediction">
        <sequence resource="EMBL-CDS" id="AEE76763"/>
    </conflict>
</comment>
<reference key="1">
    <citation type="journal article" date="2000" name="DNA Res.">
        <title>Structural analysis of Arabidopsis thaliana chromosome 3. I. Sequence features of the regions of 4,504,864 bp covered by sixty P1 and TAC clones.</title>
        <authorList>
            <person name="Sato S."/>
            <person name="Nakamura Y."/>
            <person name="Kaneko T."/>
            <person name="Katoh T."/>
            <person name="Asamizu E."/>
            <person name="Tabata S."/>
        </authorList>
    </citation>
    <scope>NUCLEOTIDE SEQUENCE [LARGE SCALE GENOMIC DNA]</scope>
    <source>
        <strain>cv. Columbia</strain>
    </source>
</reference>
<reference key="2">
    <citation type="journal article" date="2017" name="Plant J.">
        <title>Araport11: a complete reannotation of the Arabidopsis thaliana reference genome.</title>
        <authorList>
            <person name="Cheng C.Y."/>
            <person name="Krishnakumar V."/>
            <person name="Chan A.P."/>
            <person name="Thibaud-Nissen F."/>
            <person name="Schobel S."/>
            <person name="Town C.D."/>
        </authorList>
    </citation>
    <scope>GENOME REANNOTATION</scope>
    <source>
        <strain>cv. Columbia</strain>
    </source>
</reference>
<name>FB180_ARATH</name>